<dbReference type="EMBL" id="EF153630">
    <property type="protein sequence ID" value="ABM55500.1"/>
    <property type="molecule type" value="Genomic_DNA"/>
</dbReference>
<dbReference type="SMR" id="A2I7N3"/>
<dbReference type="FunCoup" id="A2I7N3">
    <property type="interactions" value="127"/>
</dbReference>
<dbReference type="STRING" id="9913.ENSBTAP00000011576"/>
<dbReference type="MEROPS" id="I04.034"/>
<dbReference type="GlyCosmos" id="A2I7N3">
    <property type="glycosylation" value="4 sites, No reported glycans"/>
</dbReference>
<dbReference type="GlyGen" id="A2I7N3">
    <property type="glycosylation" value="4 sites"/>
</dbReference>
<dbReference type="PaxDb" id="9913-ENSBTAP00000011576"/>
<dbReference type="PeptideAtlas" id="A2I7N3"/>
<dbReference type="eggNOG" id="KOG2392">
    <property type="taxonomic scope" value="Eukaryota"/>
</dbReference>
<dbReference type="InParanoid" id="A2I7N3"/>
<dbReference type="OrthoDB" id="671595at2759"/>
<dbReference type="Proteomes" id="UP000009136">
    <property type="component" value="Unplaced"/>
</dbReference>
<dbReference type="GO" id="GO:0042583">
    <property type="term" value="C:chromaffin granule"/>
    <property type="evidence" value="ECO:0007669"/>
    <property type="project" value="UniProtKB-SubCell"/>
</dbReference>
<dbReference type="GO" id="GO:0031410">
    <property type="term" value="C:cytoplasmic vesicle"/>
    <property type="evidence" value="ECO:0000250"/>
    <property type="project" value="UniProtKB"/>
</dbReference>
<dbReference type="GO" id="GO:0005615">
    <property type="term" value="C:extracellular space"/>
    <property type="evidence" value="ECO:0000250"/>
    <property type="project" value="UniProtKB"/>
</dbReference>
<dbReference type="GO" id="GO:0004867">
    <property type="term" value="F:serine-type endopeptidase inhibitor activity"/>
    <property type="evidence" value="ECO:0000250"/>
    <property type="project" value="UniProtKB"/>
</dbReference>
<dbReference type="CDD" id="cd19551">
    <property type="entry name" value="serpinA3_A1AC"/>
    <property type="match status" value="1"/>
</dbReference>
<dbReference type="FunFam" id="3.30.497.10:FF:000001">
    <property type="entry name" value="Serine protease inhibitor"/>
    <property type="match status" value="1"/>
</dbReference>
<dbReference type="FunFam" id="2.30.39.10:FF:000002">
    <property type="entry name" value="Serpin family D member 1"/>
    <property type="match status" value="1"/>
</dbReference>
<dbReference type="Gene3D" id="2.30.39.10">
    <property type="entry name" value="Alpha-1-antitrypsin, domain 1"/>
    <property type="match status" value="1"/>
</dbReference>
<dbReference type="Gene3D" id="3.30.497.10">
    <property type="entry name" value="Antithrombin, subunit I, domain 2"/>
    <property type="match status" value="1"/>
</dbReference>
<dbReference type="InterPro" id="IPR023795">
    <property type="entry name" value="Serpin_CS"/>
</dbReference>
<dbReference type="InterPro" id="IPR023796">
    <property type="entry name" value="Serpin_dom"/>
</dbReference>
<dbReference type="InterPro" id="IPR000215">
    <property type="entry name" value="Serpin_fam"/>
</dbReference>
<dbReference type="InterPro" id="IPR036186">
    <property type="entry name" value="Serpin_sf"/>
</dbReference>
<dbReference type="InterPro" id="IPR042178">
    <property type="entry name" value="Serpin_sf_1"/>
</dbReference>
<dbReference type="InterPro" id="IPR042185">
    <property type="entry name" value="Serpin_sf_2"/>
</dbReference>
<dbReference type="PANTHER" id="PTHR11461:SF145">
    <property type="entry name" value="ALPHA-1-ANTICHYMOTRYPSIN"/>
    <property type="match status" value="1"/>
</dbReference>
<dbReference type="PANTHER" id="PTHR11461">
    <property type="entry name" value="SERINE PROTEASE INHIBITOR, SERPIN"/>
    <property type="match status" value="1"/>
</dbReference>
<dbReference type="Pfam" id="PF00079">
    <property type="entry name" value="Serpin"/>
    <property type="match status" value="1"/>
</dbReference>
<dbReference type="SMART" id="SM00093">
    <property type="entry name" value="SERPIN"/>
    <property type="match status" value="1"/>
</dbReference>
<dbReference type="SUPFAM" id="SSF56574">
    <property type="entry name" value="Serpins"/>
    <property type="match status" value="1"/>
</dbReference>
<dbReference type="PROSITE" id="PS00284">
    <property type="entry name" value="SERPIN"/>
    <property type="match status" value="1"/>
</dbReference>
<protein>
    <recommendedName>
        <fullName>Serpin A3-7</fullName>
    </recommendedName>
</protein>
<organism>
    <name type="scientific">Bos taurus</name>
    <name type="common">Bovine</name>
    <dbReference type="NCBI Taxonomy" id="9913"/>
    <lineage>
        <taxon>Eukaryota</taxon>
        <taxon>Metazoa</taxon>
        <taxon>Chordata</taxon>
        <taxon>Craniata</taxon>
        <taxon>Vertebrata</taxon>
        <taxon>Euteleostomi</taxon>
        <taxon>Mammalia</taxon>
        <taxon>Eutheria</taxon>
        <taxon>Laurasiatheria</taxon>
        <taxon>Artiodactyla</taxon>
        <taxon>Ruminantia</taxon>
        <taxon>Pecora</taxon>
        <taxon>Bovidae</taxon>
        <taxon>Bovinae</taxon>
        <taxon>Bos</taxon>
    </lineage>
</organism>
<name>SPA37_BOVIN</name>
<comment type="function">
    <text evidence="2">Serine protease inhibitor.</text>
</comment>
<comment type="subunit">
    <text evidence="2">Homodimer.</text>
</comment>
<comment type="subcellular location">
    <subcellularLocation>
        <location evidence="2">Cytoplasmic vesicle</location>
        <location evidence="2">Secretory vesicle</location>
        <location evidence="2">Chromaffin granule</location>
    </subcellularLocation>
    <subcellularLocation>
        <location evidence="2">Secreted</location>
    </subcellularLocation>
</comment>
<comment type="similarity">
    <text evidence="3">Belongs to the serpin family.</text>
</comment>
<accession>A2I7N3</accession>
<sequence length="417" mass="46942">MRTERTSFLLALGLLVSGFCSRVHCLPENVTPEEQHKGTSVDGHSLASSNTDFALSLYKQLALKDPNKNVIFSPLSISIALAFLSLGAHDHTVTEILEGLKFNLTETPETEIHQGFQHLLQTFNQPSNQLQLSVGNAMFASEELKLLDKFRKDAEAFYASEVLSTNFKDSEAAVKLINEYVKNKTHGKIEKLFNDLDVLTNLILLNYIFFKAQWKTPFNPNHTYESEFHVSQNERVIVPMMTLYLETPYFRDEELGCTLVELTYTSNDSALFILPDEGKMQDLEAKLTPETLTRWRSSLQPRLIHRLRLPRFSISSHYQLKDILSQLGIKKIFTSDAGFSGITDDHKLAVSHVIHKAVLDVGEEGTEGAAVTAVVMATSSLLHTLTVSFNRPFLLSIFCKETQSIIFWGKVTNPKEA</sequence>
<gene>
    <name evidence="4" type="primary">SERPINA3-7</name>
</gene>
<proteinExistence type="inferred from homology"/>
<evidence type="ECO:0000250" key="1"/>
<evidence type="ECO:0000250" key="2">
    <source>
        <dbReference type="UniProtKB" id="Q9TTE1"/>
    </source>
</evidence>
<evidence type="ECO:0000255" key="3"/>
<evidence type="ECO:0000312" key="4">
    <source>
        <dbReference type="EMBL" id="ABM55500.1"/>
    </source>
</evidence>
<reference key="1">
    <citation type="journal article" date="2008" name="BMC Genomics">
        <title>An original SERPINA3 gene cluster: elucidation of genomic organization and gene expression in the Bos taurus 21q24 region.</title>
        <authorList>
            <person name="Pelissier P."/>
            <person name="Delourme D."/>
            <person name="Germot A."/>
            <person name="Blanchet X."/>
            <person name="Becila S."/>
            <person name="Maftah A."/>
            <person name="Leveziel H."/>
            <person name="Ouali A."/>
            <person name="Bremaud L."/>
        </authorList>
    </citation>
    <scope>NUCLEOTIDE SEQUENCE [GENOMIC DNA]</scope>
    <scope>NOMENCLATURE</scope>
</reference>
<feature type="signal peptide" evidence="1">
    <location>
        <begin position="1"/>
        <end position="25"/>
    </location>
</feature>
<feature type="chain" id="PRO_0000401161" description="Serpin A3-7" evidence="3">
    <location>
        <begin position="26"/>
        <end position="417"/>
    </location>
</feature>
<feature type="glycosylation site" description="N-linked (GlcNAc...) asparagine" evidence="3">
    <location>
        <position position="103"/>
    </location>
</feature>
<feature type="glycosylation site" description="N-linked (GlcNAc...) asparagine" evidence="3">
    <location>
        <position position="183"/>
    </location>
</feature>
<feature type="glycosylation site" description="N-linked (GlcNAc...) asparagine" evidence="3">
    <location>
        <position position="221"/>
    </location>
</feature>
<feature type="glycosylation site" description="N-linked (GlcNAc...) asparagine" evidence="3">
    <location>
        <position position="267"/>
    </location>
</feature>
<keyword id="KW-0968">Cytoplasmic vesicle</keyword>
<keyword id="KW-0325">Glycoprotein</keyword>
<keyword id="KW-0646">Protease inhibitor</keyword>
<keyword id="KW-1185">Reference proteome</keyword>
<keyword id="KW-0964">Secreted</keyword>
<keyword id="KW-0722">Serine protease inhibitor</keyword>
<keyword id="KW-0732">Signal</keyword>